<protein>
    <recommendedName>
        <fullName evidence="1">Glycine--tRNA ligase beta subunit</fullName>
        <ecNumber evidence="1">6.1.1.14</ecNumber>
    </recommendedName>
    <alternativeName>
        <fullName evidence="1">Glycyl-tRNA synthetase beta subunit</fullName>
        <shortName evidence="1">GlyRS</shortName>
    </alternativeName>
</protein>
<sequence length="722" mass="80122">MTELKPLLIELGTEELPVNALPNLSRAFFEGVLAGLERRGIVVDHGEAKSLSTPRRLAVLLTAVAVEQPKQYRELFGPYLNTAFDTEGKPTKALEGFAAKCGVNWRTLERIRDTKGERFVHRVVVPGERTDALLPGILTEAIAGMPIPKPMRWGAHEYLFARPVHWLVMLFGQDVVEAEIMGVKAGRISRGHRFLYDKPVSLSGPQNYIDVLQAAYVLVDPAARRARIVAEIEAVARQVGGVARITEDNVAQVVNLVEWPSAVLCSFERVFLEVPQEALIQTMEVNQKFFPVLDSLGKLTEKFIGIANIESNDVAEVAKGYERVIRPRFSDAKFFFNEDLKQGLKAMGERLRTVTYHAKLGTLADKVARVLVLAEAIAPQIGVDPLLARRVALLSKNDLQSRMVNEFPELQGVAGHHYALISGELPEVAMAIEDAYRPRFSGDEIARSPLGKVLGLAERLDTLACGFAVGMKPTGNKDPFGLRRNALGLARTIIESRFDLDLKVLLDQASDWVAFATTIEQERHAQESVKQSKKEAAVKHSVPQVSDEKSARIEELYDFIVERLRGYYADKGIPTTHFNAVAELKPVSLYDFHRRLDAIGRFAALPEAEALAVANKRIRNILRKAEIKIPASVDATLFDQPAESGLLVALEGVITDTRSALDCKNYVSVLTCLARLRPPIDEFFDKVMVNDENLMLRANRLALLQRLGEYLCCVAAIEHLSN</sequence>
<keyword id="KW-0030">Aminoacyl-tRNA synthetase</keyword>
<keyword id="KW-0067">ATP-binding</keyword>
<keyword id="KW-0963">Cytoplasm</keyword>
<keyword id="KW-0436">Ligase</keyword>
<keyword id="KW-0547">Nucleotide-binding</keyword>
<keyword id="KW-0648">Protein biosynthesis</keyword>
<keyword id="KW-1185">Reference proteome</keyword>
<reference key="1">
    <citation type="journal article" date="2003" name="J. Bacteriol.">
        <title>Comparative analyses of the complete genome sequences of Pierce's disease and citrus variegated chlorosis strains of Xylella fastidiosa.</title>
        <authorList>
            <person name="Van Sluys M.A."/>
            <person name="de Oliveira M.C."/>
            <person name="Monteiro-Vitorello C.B."/>
            <person name="Miyaki C.Y."/>
            <person name="Furlan L.R."/>
            <person name="Camargo L.E.A."/>
            <person name="da Silva A.C.R."/>
            <person name="Moon D.H."/>
            <person name="Takita M.A."/>
            <person name="Lemos E.G.M."/>
            <person name="Machado M.A."/>
            <person name="Ferro M.I.T."/>
            <person name="da Silva F.R."/>
            <person name="Goldman M.H.S."/>
            <person name="Goldman G.H."/>
            <person name="Lemos M.V.F."/>
            <person name="El-Dorry H."/>
            <person name="Tsai S.M."/>
            <person name="Carrer H."/>
            <person name="Carraro D.M."/>
            <person name="de Oliveira R.C."/>
            <person name="Nunes L.R."/>
            <person name="Siqueira W.J."/>
            <person name="Coutinho L.L."/>
            <person name="Kimura E.T."/>
            <person name="Ferro E.S."/>
            <person name="Harakava R."/>
            <person name="Kuramae E.E."/>
            <person name="Marino C.L."/>
            <person name="Giglioti E."/>
            <person name="Abreu I.L."/>
            <person name="Alves L.M.C."/>
            <person name="do Amaral A.M."/>
            <person name="Baia G.S."/>
            <person name="Blanco S.R."/>
            <person name="Brito M.S."/>
            <person name="Cannavan F.S."/>
            <person name="Celestino A.V."/>
            <person name="da Cunha A.F."/>
            <person name="Fenille R.C."/>
            <person name="Ferro J.A."/>
            <person name="Formighieri E.F."/>
            <person name="Kishi L.T."/>
            <person name="Leoni S.G."/>
            <person name="Oliveira A.R."/>
            <person name="Rosa V.E. Jr."/>
            <person name="Sassaki F.T."/>
            <person name="Sena J.A.D."/>
            <person name="de Souza A.A."/>
            <person name="Truffi D."/>
            <person name="Tsukumo F."/>
            <person name="Yanai G.M."/>
            <person name="Zaros L.G."/>
            <person name="Civerolo E.L."/>
            <person name="Simpson A.J.G."/>
            <person name="Almeida N.F. Jr."/>
            <person name="Setubal J.C."/>
            <person name="Kitajima J.P."/>
        </authorList>
    </citation>
    <scope>NUCLEOTIDE SEQUENCE [LARGE SCALE GENOMIC DNA]</scope>
    <source>
        <strain>Temecula1 / ATCC 700964</strain>
    </source>
</reference>
<dbReference type="EC" id="6.1.1.14" evidence="1"/>
<dbReference type="EMBL" id="AE009442">
    <property type="protein sequence ID" value="AAO28709.1"/>
    <property type="molecule type" value="Genomic_DNA"/>
</dbReference>
<dbReference type="RefSeq" id="WP_004572844.1">
    <property type="nucleotide sequence ID" value="NC_004556.1"/>
</dbReference>
<dbReference type="SMR" id="Q87D45"/>
<dbReference type="GeneID" id="93904627"/>
<dbReference type="KEGG" id="xft:PD_0841"/>
<dbReference type="HOGENOM" id="CLU_007220_2_2_6"/>
<dbReference type="Proteomes" id="UP000002516">
    <property type="component" value="Chromosome"/>
</dbReference>
<dbReference type="GO" id="GO:0005829">
    <property type="term" value="C:cytosol"/>
    <property type="evidence" value="ECO:0007669"/>
    <property type="project" value="TreeGrafter"/>
</dbReference>
<dbReference type="GO" id="GO:0004814">
    <property type="term" value="F:arginine-tRNA ligase activity"/>
    <property type="evidence" value="ECO:0007669"/>
    <property type="project" value="InterPro"/>
</dbReference>
<dbReference type="GO" id="GO:0005524">
    <property type="term" value="F:ATP binding"/>
    <property type="evidence" value="ECO:0007669"/>
    <property type="project" value="UniProtKB-UniRule"/>
</dbReference>
<dbReference type="GO" id="GO:0004820">
    <property type="term" value="F:glycine-tRNA ligase activity"/>
    <property type="evidence" value="ECO:0007669"/>
    <property type="project" value="UniProtKB-UniRule"/>
</dbReference>
<dbReference type="GO" id="GO:0006420">
    <property type="term" value="P:arginyl-tRNA aminoacylation"/>
    <property type="evidence" value="ECO:0007669"/>
    <property type="project" value="InterPro"/>
</dbReference>
<dbReference type="GO" id="GO:0006426">
    <property type="term" value="P:glycyl-tRNA aminoacylation"/>
    <property type="evidence" value="ECO:0007669"/>
    <property type="project" value="UniProtKB-UniRule"/>
</dbReference>
<dbReference type="HAMAP" id="MF_00255">
    <property type="entry name" value="Gly_tRNA_synth_beta"/>
    <property type="match status" value="1"/>
</dbReference>
<dbReference type="InterPro" id="IPR008909">
    <property type="entry name" value="DALR_anticod-bd"/>
</dbReference>
<dbReference type="InterPro" id="IPR015944">
    <property type="entry name" value="Gly-tRNA-synth_bsu"/>
</dbReference>
<dbReference type="InterPro" id="IPR006194">
    <property type="entry name" value="Gly-tRNA-synth_heterodimer"/>
</dbReference>
<dbReference type="NCBIfam" id="TIGR00211">
    <property type="entry name" value="glyS"/>
    <property type="match status" value="1"/>
</dbReference>
<dbReference type="PANTHER" id="PTHR30075:SF2">
    <property type="entry name" value="GLYCINE--TRNA LIGASE, CHLOROPLASTIC_MITOCHONDRIAL 2"/>
    <property type="match status" value="1"/>
</dbReference>
<dbReference type="PANTHER" id="PTHR30075">
    <property type="entry name" value="GLYCYL-TRNA SYNTHETASE"/>
    <property type="match status" value="1"/>
</dbReference>
<dbReference type="Pfam" id="PF05746">
    <property type="entry name" value="DALR_1"/>
    <property type="match status" value="1"/>
</dbReference>
<dbReference type="Pfam" id="PF02092">
    <property type="entry name" value="tRNA_synt_2f"/>
    <property type="match status" value="1"/>
</dbReference>
<dbReference type="PRINTS" id="PR01045">
    <property type="entry name" value="TRNASYNTHGB"/>
</dbReference>
<dbReference type="SUPFAM" id="SSF109604">
    <property type="entry name" value="HD-domain/PDEase-like"/>
    <property type="match status" value="1"/>
</dbReference>
<dbReference type="PROSITE" id="PS50861">
    <property type="entry name" value="AA_TRNA_LIGASE_II_GLYAB"/>
    <property type="match status" value="1"/>
</dbReference>
<comment type="catalytic activity">
    <reaction evidence="1">
        <text>tRNA(Gly) + glycine + ATP = glycyl-tRNA(Gly) + AMP + diphosphate</text>
        <dbReference type="Rhea" id="RHEA:16013"/>
        <dbReference type="Rhea" id="RHEA-COMP:9664"/>
        <dbReference type="Rhea" id="RHEA-COMP:9683"/>
        <dbReference type="ChEBI" id="CHEBI:30616"/>
        <dbReference type="ChEBI" id="CHEBI:33019"/>
        <dbReference type="ChEBI" id="CHEBI:57305"/>
        <dbReference type="ChEBI" id="CHEBI:78442"/>
        <dbReference type="ChEBI" id="CHEBI:78522"/>
        <dbReference type="ChEBI" id="CHEBI:456215"/>
        <dbReference type="EC" id="6.1.1.14"/>
    </reaction>
</comment>
<comment type="subunit">
    <text evidence="1">Tetramer of two alpha and two beta subunits.</text>
</comment>
<comment type="subcellular location">
    <subcellularLocation>
        <location evidence="1">Cytoplasm</location>
    </subcellularLocation>
</comment>
<comment type="similarity">
    <text evidence="1">Belongs to the class-II aminoacyl-tRNA synthetase family.</text>
</comment>
<proteinExistence type="inferred from homology"/>
<gene>
    <name evidence="1" type="primary">glyS</name>
    <name type="ordered locus">PD_0841</name>
</gene>
<evidence type="ECO:0000255" key="1">
    <source>
        <dbReference type="HAMAP-Rule" id="MF_00255"/>
    </source>
</evidence>
<name>SYGB_XYLFT</name>
<accession>Q87D45</accession>
<feature type="chain" id="PRO_0000072941" description="Glycine--tRNA ligase beta subunit">
    <location>
        <begin position="1"/>
        <end position="722"/>
    </location>
</feature>
<organism>
    <name type="scientific">Xylella fastidiosa (strain Temecula1 / ATCC 700964)</name>
    <dbReference type="NCBI Taxonomy" id="183190"/>
    <lineage>
        <taxon>Bacteria</taxon>
        <taxon>Pseudomonadati</taxon>
        <taxon>Pseudomonadota</taxon>
        <taxon>Gammaproteobacteria</taxon>
        <taxon>Lysobacterales</taxon>
        <taxon>Lysobacteraceae</taxon>
        <taxon>Xylella</taxon>
    </lineage>
</organism>